<keyword id="KW-1003">Cell membrane</keyword>
<keyword id="KW-0342">GTP-binding</keyword>
<keyword id="KW-0378">Hydrolase</keyword>
<keyword id="KW-0472">Membrane</keyword>
<keyword id="KW-0547">Nucleotide-binding</keyword>
<keyword id="KW-0648">Protein biosynthesis</keyword>
<sequence>MDNEQRLKRRENIRNFSIIAHIDHGKSTLADRILENTKSVETRDMQDQLLDSMDLERERGITIKLNAVRLKYEAKDGNTYTFHLIDTPGHVDFTYEVSRSLAACEGAILVVDAAQGIEAQTLANVYLALDNELELLPVINKIDLPAAEPERVKQEIEDMIGLDQDDVVLASAKSNIGIEEILEKIVEVVPAPDGDPEAPLKALIFDSEYDPYRGVISSIRIVDGVVKAGDKIRMMATGKEFEVTEVGINTPKQLPVDELTVGDVGYIIASIKNVDDSRVGDTITLASRPASEPLQGYKKMNPMVYCGLFPIDNKNYNDLREALEKLQLNDASLEFEPESSQALGFGYRTGFLGMLHMEIIQERIEREFGIELIATAPSVIYQCVLRDGSEVTVDNPAQMPDRDKIDKIFEPYVRATMMVPNDYVGAVMELCQRKRGQFINMDYLDDIRVNIVYELPLAEVVFDFFDQLKSNTKGYASFDYEFIENKESNLVKMDILLNGDKVDALSFIVHRDFAYERGKALVEKLKTLIPRQQFEVPVQAAIGQKIVARTNIKSMGKNVLAKCYGGDISRKRKLLEKQKAGKAKMKAVGNVEIPQDAFLAVLKMDDE</sequence>
<gene>
    <name evidence="1" type="primary">lepA</name>
    <name type="ordered locus">SACOL1641</name>
</gene>
<proteinExistence type="inferred from homology"/>
<dbReference type="EC" id="3.6.5.n1" evidence="1"/>
<dbReference type="EMBL" id="CP000046">
    <property type="protein sequence ID" value="AAW38257.1"/>
    <property type="molecule type" value="Genomic_DNA"/>
</dbReference>
<dbReference type="RefSeq" id="WP_000368341.1">
    <property type="nucleotide sequence ID" value="NZ_JBGOFO010000003.1"/>
</dbReference>
<dbReference type="SMR" id="Q5HFH6"/>
<dbReference type="KEGG" id="sac:SACOL1641"/>
<dbReference type="HOGENOM" id="CLU_009995_3_3_9"/>
<dbReference type="Proteomes" id="UP000000530">
    <property type="component" value="Chromosome"/>
</dbReference>
<dbReference type="GO" id="GO:0005886">
    <property type="term" value="C:plasma membrane"/>
    <property type="evidence" value="ECO:0007669"/>
    <property type="project" value="UniProtKB-SubCell"/>
</dbReference>
<dbReference type="GO" id="GO:0005525">
    <property type="term" value="F:GTP binding"/>
    <property type="evidence" value="ECO:0007669"/>
    <property type="project" value="UniProtKB-UniRule"/>
</dbReference>
<dbReference type="GO" id="GO:0003924">
    <property type="term" value="F:GTPase activity"/>
    <property type="evidence" value="ECO:0007669"/>
    <property type="project" value="UniProtKB-UniRule"/>
</dbReference>
<dbReference type="GO" id="GO:0043022">
    <property type="term" value="F:ribosome binding"/>
    <property type="evidence" value="ECO:0007669"/>
    <property type="project" value="UniProtKB-UniRule"/>
</dbReference>
<dbReference type="GO" id="GO:0003746">
    <property type="term" value="F:translation elongation factor activity"/>
    <property type="evidence" value="ECO:0007669"/>
    <property type="project" value="UniProtKB-UniRule"/>
</dbReference>
<dbReference type="GO" id="GO:0045727">
    <property type="term" value="P:positive regulation of translation"/>
    <property type="evidence" value="ECO:0007669"/>
    <property type="project" value="UniProtKB-UniRule"/>
</dbReference>
<dbReference type="CDD" id="cd03699">
    <property type="entry name" value="EF4_II"/>
    <property type="match status" value="1"/>
</dbReference>
<dbReference type="CDD" id="cd16260">
    <property type="entry name" value="EF4_III"/>
    <property type="match status" value="1"/>
</dbReference>
<dbReference type="CDD" id="cd01890">
    <property type="entry name" value="LepA"/>
    <property type="match status" value="1"/>
</dbReference>
<dbReference type="CDD" id="cd03709">
    <property type="entry name" value="lepA_C"/>
    <property type="match status" value="1"/>
</dbReference>
<dbReference type="FunFam" id="3.40.50.300:FF:000078">
    <property type="entry name" value="Elongation factor 4"/>
    <property type="match status" value="1"/>
</dbReference>
<dbReference type="FunFam" id="2.40.30.10:FF:000015">
    <property type="entry name" value="Translation factor GUF1, mitochondrial"/>
    <property type="match status" value="1"/>
</dbReference>
<dbReference type="FunFam" id="3.30.70.240:FF:000007">
    <property type="entry name" value="Translation factor GUF1, mitochondrial"/>
    <property type="match status" value="1"/>
</dbReference>
<dbReference type="FunFam" id="3.30.70.2570:FF:000001">
    <property type="entry name" value="Translation factor GUF1, mitochondrial"/>
    <property type="match status" value="1"/>
</dbReference>
<dbReference type="FunFam" id="3.30.70.870:FF:000004">
    <property type="entry name" value="Translation factor GUF1, mitochondrial"/>
    <property type="match status" value="1"/>
</dbReference>
<dbReference type="Gene3D" id="3.30.70.240">
    <property type="match status" value="1"/>
</dbReference>
<dbReference type="Gene3D" id="3.30.70.2570">
    <property type="entry name" value="Elongation factor 4, C-terminal domain"/>
    <property type="match status" value="1"/>
</dbReference>
<dbReference type="Gene3D" id="3.30.70.870">
    <property type="entry name" value="Elongation Factor G (Translational Gtpase), domain 3"/>
    <property type="match status" value="1"/>
</dbReference>
<dbReference type="Gene3D" id="3.40.50.300">
    <property type="entry name" value="P-loop containing nucleotide triphosphate hydrolases"/>
    <property type="match status" value="1"/>
</dbReference>
<dbReference type="Gene3D" id="2.40.30.10">
    <property type="entry name" value="Translation factors"/>
    <property type="match status" value="1"/>
</dbReference>
<dbReference type="HAMAP" id="MF_00071">
    <property type="entry name" value="LepA"/>
    <property type="match status" value="1"/>
</dbReference>
<dbReference type="InterPro" id="IPR006297">
    <property type="entry name" value="EF-4"/>
</dbReference>
<dbReference type="InterPro" id="IPR035647">
    <property type="entry name" value="EFG_III/V"/>
</dbReference>
<dbReference type="InterPro" id="IPR000640">
    <property type="entry name" value="EFG_V-like"/>
</dbReference>
<dbReference type="InterPro" id="IPR004161">
    <property type="entry name" value="EFTu-like_2"/>
</dbReference>
<dbReference type="InterPro" id="IPR031157">
    <property type="entry name" value="G_TR_CS"/>
</dbReference>
<dbReference type="InterPro" id="IPR038363">
    <property type="entry name" value="LepA_C_sf"/>
</dbReference>
<dbReference type="InterPro" id="IPR013842">
    <property type="entry name" value="LepA_CTD"/>
</dbReference>
<dbReference type="InterPro" id="IPR035654">
    <property type="entry name" value="LepA_IV"/>
</dbReference>
<dbReference type="InterPro" id="IPR027417">
    <property type="entry name" value="P-loop_NTPase"/>
</dbReference>
<dbReference type="InterPro" id="IPR005225">
    <property type="entry name" value="Small_GTP-bd"/>
</dbReference>
<dbReference type="InterPro" id="IPR000795">
    <property type="entry name" value="T_Tr_GTP-bd_dom"/>
</dbReference>
<dbReference type="InterPro" id="IPR009000">
    <property type="entry name" value="Transl_B-barrel_sf"/>
</dbReference>
<dbReference type="NCBIfam" id="TIGR01393">
    <property type="entry name" value="lepA"/>
    <property type="match status" value="1"/>
</dbReference>
<dbReference type="NCBIfam" id="TIGR00231">
    <property type="entry name" value="small_GTP"/>
    <property type="match status" value="1"/>
</dbReference>
<dbReference type="PANTHER" id="PTHR43512:SF4">
    <property type="entry name" value="TRANSLATION FACTOR GUF1 HOMOLOG, CHLOROPLASTIC"/>
    <property type="match status" value="1"/>
</dbReference>
<dbReference type="PANTHER" id="PTHR43512">
    <property type="entry name" value="TRANSLATION FACTOR GUF1-RELATED"/>
    <property type="match status" value="1"/>
</dbReference>
<dbReference type="Pfam" id="PF00679">
    <property type="entry name" value="EFG_C"/>
    <property type="match status" value="1"/>
</dbReference>
<dbReference type="Pfam" id="PF00009">
    <property type="entry name" value="GTP_EFTU"/>
    <property type="match status" value="1"/>
</dbReference>
<dbReference type="Pfam" id="PF03144">
    <property type="entry name" value="GTP_EFTU_D2"/>
    <property type="match status" value="1"/>
</dbReference>
<dbReference type="Pfam" id="PF06421">
    <property type="entry name" value="LepA_C"/>
    <property type="match status" value="1"/>
</dbReference>
<dbReference type="PRINTS" id="PR00315">
    <property type="entry name" value="ELONGATNFCT"/>
</dbReference>
<dbReference type="SMART" id="SM00838">
    <property type="entry name" value="EFG_C"/>
    <property type="match status" value="1"/>
</dbReference>
<dbReference type="SUPFAM" id="SSF54980">
    <property type="entry name" value="EF-G C-terminal domain-like"/>
    <property type="match status" value="2"/>
</dbReference>
<dbReference type="SUPFAM" id="SSF52540">
    <property type="entry name" value="P-loop containing nucleoside triphosphate hydrolases"/>
    <property type="match status" value="1"/>
</dbReference>
<dbReference type="SUPFAM" id="SSF50447">
    <property type="entry name" value="Translation proteins"/>
    <property type="match status" value="1"/>
</dbReference>
<dbReference type="PROSITE" id="PS00301">
    <property type="entry name" value="G_TR_1"/>
    <property type="match status" value="1"/>
</dbReference>
<dbReference type="PROSITE" id="PS51722">
    <property type="entry name" value="G_TR_2"/>
    <property type="match status" value="1"/>
</dbReference>
<reference key="1">
    <citation type="journal article" date="2005" name="J. Bacteriol.">
        <title>Insights on evolution of virulence and resistance from the complete genome analysis of an early methicillin-resistant Staphylococcus aureus strain and a biofilm-producing methicillin-resistant Staphylococcus epidermidis strain.</title>
        <authorList>
            <person name="Gill S.R."/>
            <person name="Fouts D.E."/>
            <person name="Archer G.L."/>
            <person name="Mongodin E.F."/>
            <person name="DeBoy R.T."/>
            <person name="Ravel J."/>
            <person name="Paulsen I.T."/>
            <person name="Kolonay J.F."/>
            <person name="Brinkac L.M."/>
            <person name="Beanan M.J."/>
            <person name="Dodson R.J."/>
            <person name="Daugherty S.C."/>
            <person name="Madupu R."/>
            <person name="Angiuoli S.V."/>
            <person name="Durkin A.S."/>
            <person name="Haft D.H."/>
            <person name="Vamathevan J.J."/>
            <person name="Khouri H."/>
            <person name="Utterback T.R."/>
            <person name="Lee C."/>
            <person name="Dimitrov G."/>
            <person name="Jiang L."/>
            <person name="Qin H."/>
            <person name="Weidman J."/>
            <person name="Tran K."/>
            <person name="Kang K.H."/>
            <person name="Hance I.R."/>
            <person name="Nelson K.E."/>
            <person name="Fraser C.M."/>
        </authorList>
    </citation>
    <scope>NUCLEOTIDE SEQUENCE [LARGE SCALE GENOMIC DNA]</scope>
    <source>
        <strain>COL</strain>
    </source>
</reference>
<protein>
    <recommendedName>
        <fullName evidence="1">Elongation factor 4</fullName>
        <shortName evidence="1">EF-4</shortName>
        <ecNumber evidence="1">3.6.5.n1</ecNumber>
    </recommendedName>
    <alternativeName>
        <fullName evidence="1">Ribosomal back-translocase LepA</fullName>
    </alternativeName>
</protein>
<comment type="function">
    <text evidence="1">Required for accurate and efficient protein synthesis under certain stress conditions. May act as a fidelity factor of the translation reaction, by catalyzing a one-codon backward translocation of tRNAs on improperly translocated ribosomes. Back-translocation proceeds from a post-translocation (POST) complex to a pre-translocation (PRE) complex, thus giving elongation factor G a second chance to translocate the tRNAs correctly. Binds to ribosomes in a GTP-dependent manner.</text>
</comment>
<comment type="catalytic activity">
    <reaction evidence="1">
        <text>GTP + H2O = GDP + phosphate + H(+)</text>
        <dbReference type="Rhea" id="RHEA:19669"/>
        <dbReference type="ChEBI" id="CHEBI:15377"/>
        <dbReference type="ChEBI" id="CHEBI:15378"/>
        <dbReference type="ChEBI" id="CHEBI:37565"/>
        <dbReference type="ChEBI" id="CHEBI:43474"/>
        <dbReference type="ChEBI" id="CHEBI:58189"/>
        <dbReference type="EC" id="3.6.5.n1"/>
    </reaction>
</comment>
<comment type="subcellular location">
    <subcellularLocation>
        <location evidence="1">Cell membrane</location>
        <topology evidence="1">Peripheral membrane protein</topology>
        <orientation evidence="1">Cytoplasmic side</orientation>
    </subcellularLocation>
</comment>
<comment type="similarity">
    <text evidence="1">Belongs to the TRAFAC class translation factor GTPase superfamily. Classic translation factor GTPase family. LepA subfamily.</text>
</comment>
<organism>
    <name type="scientific">Staphylococcus aureus (strain COL)</name>
    <dbReference type="NCBI Taxonomy" id="93062"/>
    <lineage>
        <taxon>Bacteria</taxon>
        <taxon>Bacillati</taxon>
        <taxon>Bacillota</taxon>
        <taxon>Bacilli</taxon>
        <taxon>Bacillales</taxon>
        <taxon>Staphylococcaceae</taxon>
        <taxon>Staphylococcus</taxon>
    </lineage>
</organism>
<evidence type="ECO:0000255" key="1">
    <source>
        <dbReference type="HAMAP-Rule" id="MF_00071"/>
    </source>
</evidence>
<feature type="chain" id="PRO_0000176340" description="Elongation factor 4">
    <location>
        <begin position="1"/>
        <end position="607"/>
    </location>
</feature>
<feature type="domain" description="tr-type G">
    <location>
        <begin position="11"/>
        <end position="193"/>
    </location>
</feature>
<feature type="binding site" evidence="1">
    <location>
        <begin position="23"/>
        <end position="28"/>
    </location>
    <ligand>
        <name>GTP</name>
        <dbReference type="ChEBI" id="CHEBI:37565"/>
    </ligand>
</feature>
<feature type="binding site" evidence="1">
    <location>
        <begin position="140"/>
        <end position="143"/>
    </location>
    <ligand>
        <name>GTP</name>
        <dbReference type="ChEBI" id="CHEBI:37565"/>
    </ligand>
</feature>
<name>LEPA_STAAC</name>
<accession>Q5HFH6</accession>